<reference evidence="9" key="1">
    <citation type="thesis" date="2007" institute="Sao Paulo State University" country="Brazil">
        <title>Proteomic analysis of immunodominant allergens from the venom of the social wasp Polybia paulista.</title>
        <authorList>
            <person name="Santos L.D."/>
        </authorList>
    </citation>
    <scope>PROTEIN SEQUENCE</scope>
    <scope>SUBCELLULAR LOCATION</scope>
    <scope>TISSUE SPECIFICITY</scope>
    <scope>MASS SPECTROMETRY</scope>
    <scope>ALLERGEN</scope>
    <source>
        <tissue evidence="5">Venom</tissue>
    </source>
</reference>
<reference key="2">
    <citation type="journal article" date="2014" name="J. Proteome Res.">
        <title>Using proteomic strategies for sequencing and post-translational modifications assignment of antigen-5, a major allergen from the venom of the social wasp Polybia paulista.</title>
        <authorList>
            <person name="Dos Santos-Pinto J.R."/>
            <person name="Dos Santos L.D."/>
            <person name="Andrade Arcuri H."/>
            <person name="Castro F.M."/>
            <person name="Kalil J.E."/>
            <person name="Palma M.S."/>
        </authorList>
    </citation>
    <scope>PROTEIN SEQUENCE OF 1-14 AND 200-207</scope>
    <scope>SUBCELLULAR LOCATION</scope>
    <scope>MASS SPECTROMETRY</scope>
    <scope>IDENTIFICATION BY MASS SPECTROMETRY</scope>
    <scope>GLYCATION AT LYS-141</scope>
    <scope>PHOSPHORYLATION AT TYR-111</scope>
    <source>
        <tissue evidence="7">Venom</tissue>
    </source>
</reference>
<reference key="3">
    <citation type="journal article" date="2010" name="J. Proteome Res.">
        <title>Profiling the proteome of the venom from the social wasp Polybia paulista: a clue to understand the envenoming mechanism.</title>
        <authorList>
            <person name="dos Santos L.D."/>
            <person name="Santos K.S."/>
            <person name="Pinto J.R."/>
            <person name="Dias N.B."/>
            <person name="de Souza B.M."/>
            <person name="dos Santos M.F."/>
            <person name="Perales J."/>
            <person name="Domont G.B."/>
            <person name="Castro F.M."/>
            <person name="Kalil J.E."/>
            <person name="Palma M.S."/>
        </authorList>
    </citation>
    <scope>SUBCELLULAR LOCATION</scope>
    <scope>GLYCOSYLATION</scope>
    <scope>MASS SPECTROMETRY</scope>
    <scope>IDENTIFICATION BY MASS SPECTROMETRY</scope>
    <source>
        <tissue evidence="6">Venom</tissue>
    </source>
</reference>
<name>VA5_POLPI</name>
<keyword id="KW-0020">Allergen</keyword>
<keyword id="KW-0903">Direct protein sequencing</keyword>
<keyword id="KW-1015">Disulfide bond</keyword>
<keyword id="KW-0971">Glycation</keyword>
<keyword id="KW-0325">Glycoprotein</keyword>
<keyword id="KW-0597">Phosphoprotein</keyword>
<keyword id="KW-0964">Secreted</keyword>
<accession>P86686</accession>
<organism>
    <name type="scientific">Polybia paulista</name>
    <name type="common">Neotropical social wasp</name>
    <name type="synonym">Swarm-founding polistine wasp</name>
    <dbReference type="NCBI Taxonomy" id="291283"/>
    <lineage>
        <taxon>Eukaryota</taxon>
        <taxon>Metazoa</taxon>
        <taxon>Ecdysozoa</taxon>
        <taxon>Arthropoda</taxon>
        <taxon>Hexapoda</taxon>
        <taxon>Insecta</taxon>
        <taxon>Pterygota</taxon>
        <taxon>Neoptera</taxon>
        <taxon>Endopterygota</taxon>
        <taxon>Hymenoptera</taxon>
        <taxon>Apocrita</taxon>
        <taxon>Aculeata</taxon>
        <taxon>Vespoidea</taxon>
        <taxon>Vespidae</taxon>
        <taxon>Polistinae</taxon>
        <taxon>Epiponini</taxon>
        <taxon>Polybia</taxon>
    </lineage>
</organism>
<feature type="chain" id="PRO_0000396652" description="Venom allergen 5" evidence="5">
    <location>
        <begin position="1"/>
        <end position="207"/>
    </location>
</feature>
<feature type="domain" description="SCP" evidence="2">
    <location>
        <begin position="49"/>
        <end position="192"/>
    </location>
</feature>
<feature type="modified residue" description="Phosphotyrosine" evidence="4">
    <location>
        <position position="111"/>
    </location>
</feature>
<feature type="glycosylation site" description="N-linked (Glc) (glycation) lysine" evidence="4">
    <location>
        <position position="141"/>
    </location>
</feature>
<feature type="disulfide bond" evidence="1">
    <location>
        <begin position="4"/>
        <end position="16"/>
    </location>
</feature>
<feature type="disulfide bond" evidence="1">
    <location>
        <begin position="8"/>
        <end position="105"/>
    </location>
</feature>
<feature type="disulfide bond" evidence="1">
    <location>
        <begin position="29"/>
        <end position="97"/>
    </location>
</feature>
<feature type="disulfide bond" evidence="1">
    <location>
        <begin position="173"/>
        <end position="190"/>
    </location>
</feature>
<comment type="subcellular location">
    <subcellularLocation>
        <location evidence="3 4 5">Secreted</location>
    </subcellularLocation>
</comment>
<comment type="tissue specificity">
    <text evidence="10">Expressed by the venom gland.</text>
</comment>
<comment type="PTM">
    <text evidence="3">Glycosylated.</text>
</comment>
<comment type="mass spectrometry"/>
<comment type="mass spectrometry"/>
<comment type="mass spectrometry"/>
<comment type="allergen">
    <text evidence="4 5">Causes an allergic reaction in human (PubMed:24308509, Ref.1). Binds to IgE (PubMed:24308509).</text>
</comment>
<comment type="miscellaneous">
    <text evidence="5">On the 2D-gel the determined pI of this protein is: 9.7, its MW is: 26.5 kDa.</text>
</comment>
<comment type="similarity">
    <text evidence="9">Belongs to the CRISP family. Venom allergen 5-like subfamily.</text>
</comment>
<proteinExistence type="evidence at protein level"/>
<sequence>NKYCNIKCSKVAHTVCQTGESTKPSSKNCAKVSITSVGVTEEEKKLIVDEHNRFRQKVAQGLETRGNPGPQPAASDMNNLVWNDELAYIAQVWASQCQFFVHDKCRNTAQYQVGQNIAYSASTAAYPGVVKLIVLWENEVKDFNYNTGITKENFAKVGHYTQVVWAKTKEVGCGSIKYIEKGMKSHYLVCNYGPAGNVLGAQIYEIK</sequence>
<dbReference type="SMR" id="P86686"/>
<dbReference type="Allergome" id="12001">
    <property type="allergen name" value="Poly p 5.0102"/>
</dbReference>
<dbReference type="Allergome" id="8738">
    <property type="allergen name" value="Poly p 5"/>
</dbReference>
<dbReference type="iPTMnet" id="P86686"/>
<dbReference type="GO" id="GO:0005576">
    <property type="term" value="C:extracellular region"/>
    <property type="evidence" value="ECO:0007669"/>
    <property type="project" value="UniProtKB-SubCell"/>
</dbReference>
<dbReference type="CDD" id="cd05380">
    <property type="entry name" value="CAP_euk"/>
    <property type="match status" value="1"/>
</dbReference>
<dbReference type="Gene3D" id="3.40.33.10">
    <property type="entry name" value="CAP"/>
    <property type="match status" value="1"/>
</dbReference>
<dbReference type="InterPro" id="IPR018244">
    <property type="entry name" value="Allrgn_V5/Tpx1_CS"/>
</dbReference>
<dbReference type="InterPro" id="IPR014044">
    <property type="entry name" value="CAP_dom"/>
</dbReference>
<dbReference type="InterPro" id="IPR035940">
    <property type="entry name" value="CAP_sf"/>
</dbReference>
<dbReference type="InterPro" id="IPR001283">
    <property type="entry name" value="CRISP-related"/>
</dbReference>
<dbReference type="InterPro" id="IPR002413">
    <property type="entry name" value="V5_allergen-like"/>
</dbReference>
<dbReference type="PANTHER" id="PTHR10334">
    <property type="entry name" value="CYSTEINE-RICH SECRETORY PROTEIN-RELATED"/>
    <property type="match status" value="1"/>
</dbReference>
<dbReference type="Pfam" id="PF00188">
    <property type="entry name" value="CAP"/>
    <property type="match status" value="1"/>
</dbReference>
<dbReference type="PRINTS" id="PR00838">
    <property type="entry name" value="V5ALLERGEN"/>
</dbReference>
<dbReference type="PRINTS" id="PR00837">
    <property type="entry name" value="V5TPXLIKE"/>
</dbReference>
<dbReference type="SMART" id="SM00198">
    <property type="entry name" value="SCP"/>
    <property type="match status" value="1"/>
</dbReference>
<dbReference type="SUPFAM" id="SSF55797">
    <property type="entry name" value="PR-1-like"/>
    <property type="match status" value="1"/>
</dbReference>
<dbReference type="PROSITE" id="PS01009">
    <property type="entry name" value="CRISP_1"/>
    <property type="match status" value="1"/>
</dbReference>
<dbReference type="PROSITE" id="PS01010">
    <property type="entry name" value="CRISP_2"/>
    <property type="match status" value="1"/>
</dbReference>
<protein>
    <recommendedName>
        <fullName evidence="1">Venom allergen 5</fullName>
    </recommendedName>
    <alternativeName>
        <fullName evidence="8">Antigen 5</fullName>
        <shortName evidence="1">Ag5</shortName>
    </alternativeName>
    <alternativeName>
        <fullName>Cysteine-rich venom protein</fullName>
        <shortName>CRVP</shortName>
    </alternativeName>
    <allergenName evidence="9">Poly p 5</allergenName>
</protein>
<evidence type="ECO:0000250" key="1">
    <source>
        <dbReference type="UniProtKB" id="P10736"/>
    </source>
</evidence>
<evidence type="ECO:0000255" key="2"/>
<evidence type="ECO:0000269" key="3">
    <source>
    </source>
</evidence>
<evidence type="ECO:0000269" key="4">
    <source>
    </source>
</evidence>
<evidence type="ECO:0000269" key="5">
    <source ref="1"/>
</evidence>
<evidence type="ECO:0000303" key="6">
    <source>
    </source>
</evidence>
<evidence type="ECO:0000303" key="7">
    <source>
    </source>
</evidence>
<evidence type="ECO:0000303" key="8">
    <source ref="1"/>
</evidence>
<evidence type="ECO:0000305" key="9"/>
<evidence type="ECO:0000305" key="10">
    <source ref="1"/>
</evidence>